<proteinExistence type="evidence at transcript level"/>
<accession>C0HKF7</accession>
<accession>P17205</accession>
<accession>Q23988</accession>
<accession>Q9VAD9</accession>
<accession>Q9VAE0</accession>
<gene>
    <name evidence="6" type="primary">Jon99Cii</name>
    <name evidence="4" type="synonym">SER1</name>
    <name evidence="6" type="synonym">Ser99Da</name>
    <name evidence="6" type="ORF">CG7877</name>
</gene>
<organism>
    <name type="scientific">Drosophila melanogaster</name>
    <name type="common">Fruit fly</name>
    <dbReference type="NCBI Taxonomy" id="7227"/>
    <lineage>
        <taxon>Eukaryota</taxon>
        <taxon>Metazoa</taxon>
        <taxon>Ecdysozoa</taxon>
        <taxon>Arthropoda</taxon>
        <taxon>Hexapoda</taxon>
        <taxon>Insecta</taxon>
        <taxon>Pterygota</taxon>
        <taxon>Neoptera</taxon>
        <taxon>Endopterygota</taxon>
        <taxon>Diptera</taxon>
        <taxon>Brachycera</taxon>
        <taxon>Muscomorpha</taxon>
        <taxon>Ephydroidea</taxon>
        <taxon>Drosophilidae</taxon>
        <taxon>Drosophila</taxon>
        <taxon>Sophophora</taxon>
    </lineage>
</organism>
<feature type="signal peptide" evidence="5">
    <location>
        <begin position="1"/>
        <end position="21"/>
    </location>
</feature>
<feature type="propeptide" id="PRO_0000440557" evidence="1">
    <location>
        <begin position="22"/>
        <end position="35"/>
    </location>
</feature>
<feature type="chain" id="PRO_0000440558" description="Serine protease 1">
    <location>
        <begin position="36"/>
        <end position="265"/>
    </location>
</feature>
<feature type="domain" description="Peptidase S1" evidence="2">
    <location>
        <begin position="36"/>
        <end position="262"/>
    </location>
</feature>
<feature type="active site" description="Charge relay system" evidence="2">
    <location>
        <position position="78"/>
    </location>
</feature>
<feature type="active site" description="Charge relay system" evidence="2">
    <location>
        <position position="123"/>
    </location>
</feature>
<feature type="active site" description="Charge relay system" evidence="2">
    <location>
        <position position="215"/>
    </location>
</feature>
<feature type="disulfide bond" evidence="2">
    <location>
        <begin position="63"/>
        <end position="79"/>
    </location>
</feature>
<feature type="disulfide bond" evidence="2">
    <location>
        <begin position="189"/>
        <end position="201"/>
    </location>
</feature>
<feature type="disulfide bond" evidence="2">
    <location>
        <begin position="211"/>
        <end position="239"/>
    </location>
</feature>
<feature type="sequence conflict" description="In Ref. 4; AAA18625." evidence="5" ref="4">
    <original>L</original>
    <variation>V</variation>
    <location>
        <position position="74"/>
    </location>
</feature>
<feature type="sequence conflict" description="In Ref. 4; AAA18625." evidence="5" ref="4">
    <original>V</original>
    <variation>A</variation>
    <location>
        <position position="181"/>
    </location>
</feature>
<feature type="sequence conflict" description="In Ref. 4; AAA18625." evidence="5" ref="4">
    <original>S</original>
    <variation>R</variation>
    <location>
        <position position="187"/>
    </location>
</feature>
<feature type="sequence conflict" description="In Ref. 4; AAA18625." evidence="5" ref="4">
    <original>S</original>
    <variation>T</variation>
    <location>
        <position position="215"/>
    </location>
</feature>
<comment type="function">
    <text evidence="4">Major function may be to aid in digestion.</text>
</comment>
<comment type="tissue specificity">
    <text evidence="3">Abundantly expressed in the larval gut.</text>
</comment>
<comment type="developmental stage">
    <text evidence="3">Expression appears at the late embryo stage and continues to increase in abundance throughout the larval stage. No expression in pupae but is expressed in the adult.</text>
</comment>
<comment type="similarity">
    <text evidence="2">Belongs to the peptidase S1 family.</text>
</comment>
<name>SER1_DROME</name>
<sequence>MKLFVFLALAVAAATAVPAPAQKLTPTPIKDIQGRITNGYPAYEGKVPYIVGLLFSGNGNWWCGGSIIGNTWVLTAAHCTNGASGVTINYGASIRTQPQYTHWVGSGDIIQHHHYNSGNLHNDISLIRTPHVDFWSLVNKVELPSYNDRYQDYAGWWAVASGWGGTYDGSPLPDWLQSVDVQIISQSDCSRTWSLHDNMICINTDGGKSTCGGDSGGPLVTHDGNRLVGVTSFGSAAGCQSGAPAVFSRVTGYLDWIRDNTGISY</sequence>
<reference key="1">
    <citation type="journal article" date="1989" name="Mol. Cell. Biol.">
        <title>Levels of RNA from a family of putative serine protease genes are reduced in Drosophila melanogaster dunce mutants and are regulated by cyclic AMP.</title>
        <authorList>
            <person name="Yun Y."/>
            <person name="Davis R.L."/>
        </authorList>
    </citation>
    <scope>NUCLEOTIDE SEQUENCE [GENOMIC DNA]</scope>
    <scope>TISSUE SPECIFICITY</scope>
    <scope>DEVELOPMENTAL STAGE</scope>
    <source>
        <strain>Canton-S</strain>
    </source>
</reference>
<reference key="2">
    <citation type="journal article" date="2000" name="Science">
        <title>The genome sequence of Drosophila melanogaster.</title>
        <authorList>
            <person name="Adams M.D."/>
            <person name="Celniker S.E."/>
            <person name="Holt R.A."/>
            <person name="Evans C.A."/>
            <person name="Gocayne J.D."/>
            <person name="Amanatides P.G."/>
            <person name="Scherer S.E."/>
            <person name="Li P.W."/>
            <person name="Hoskins R.A."/>
            <person name="Galle R.F."/>
            <person name="George R.A."/>
            <person name="Lewis S.E."/>
            <person name="Richards S."/>
            <person name="Ashburner M."/>
            <person name="Henderson S.N."/>
            <person name="Sutton G.G."/>
            <person name="Wortman J.R."/>
            <person name="Yandell M.D."/>
            <person name="Zhang Q."/>
            <person name="Chen L.X."/>
            <person name="Brandon R.C."/>
            <person name="Rogers Y.-H.C."/>
            <person name="Blazej R.G."/>
            <person name="Champe M."/>
            <person name="Pfeiffer B.D."/>
            <person name="Wan K.H."/>
            <person name="Doyle C."/>
            <person name="Baxter E.G."/>
            <person name="Helt G."/>
            <person name="Nelson C.R."/>
            <person name="Miklos G.L.G."/>
            <person name="Abril J.F."/>
            <person name="Agbayani A."/>
            <person name="An H.-J."/>
            <person name="Andrews-Pfannkoch C."/>
            <person name="Baldwin D."/>
            <person name="Ballew R.M."/>
            <person name="Basu A."/>
            <person name="Baxendale J."/>
            <person name="Bayraktaroglu L."/>
            <person name="Beasley E.M."/>
            <person name="Beeson K.Y."/>
            <person name="Benos P.V."/>
            <person name="Berman B.P."/>
            <person name="Bhandari D."/>
            <person name="Bolshakov S."/>
            <person name="Borkova D."/>
            <person name="Botchan M.R."/>
            <person name="Bouck J."/>
            <person name="Brokstein P."/>
            <person name="Brottier P."/>
            <person name="Burtis K.C."/>
            <person name="Busam D.A."/>
            <person name="Butler H."/>
            <person name="Cadieu E."/>
            <person name="Center A."/>
            <person name="Chandra I."/>
            <person name="Cherry J.M."/>
            <person name="Cawley S."/>
            <person name="Dahlke C."/>
            <person name="Davenport L.B."/>
            <person name="Davies P."/>
            <person name="de Pablos B."/>
            <person name="Delcher A."/>
            <person name="Deng Z."/>
            <person name="Mays A.D."/>
            <person name="Dew I."/>
            <person name="Dietz S.M."/>
            <person name="Dodson K."/>
            <person name="Doup L.E."/>
            <person name="Downes M."/>
            <person name="Dugan-Rocha S."/>
            <person name="Dunkov B.C."/>
            <person name="Dunn P."/>
            <person name="Durbin K.J."/>
            <person name="Evangelista C.C."/>
            <person name="Ferraz C."/>
            <person name="Ferriera S."/>
            <person name="Fleischmann W."/>
            <person name="Fosler C."/>
            <person name="Gabrielian A.E."/>
            <person name="Garg N.S."/>
            <person name="Gelbart W.M."/>
            <person name="Glasser K."/>
            <person name="Glodek A."/>
            <person name="Gong F."/>
            <person name="Gorrell J.H."/>
            <person name="Gu Z."/>
            <person name="Guan P."/>
            <person name="Harris M."/>
            <person name="Harris N.L."/>
            <person name="Harvey D.A."/>
            <person name="Heiman T.J."/>
            <person name="Hernandez J.R."/>
            <person name="Houck J."/>
            <person name="Hostin D."/>
            <person name="Houston K.A."/>
            <person name="Howland T.J."/>
            <person name="Wei M.-H."/>
            <person name="Ibegwam C."/>
            <person name="Jalali M."/>
            <person name="Kalush F."/>
            <person name="Karpen G.H."/>
            <person name="Ke Z."/>
            <person name="Kennison J.A."/>
            <person name="Ketchum K.A."/>
            <person name="Kimmel B.E."/>
            <person name="Kodira C.D."/>
            <person name="Kraft C.L."/>
            <person name="Kravitz S."/>
            <person name="Kulp D."/>
            <person name="Lai Z."/>
            <person name="Lasko P."/>
            <person name="Lei Y."/>
            <person name="Levitsky A.A."/>
            <person name="Li J.H."/>
            <person name="Li Z."/>
            <person name="Liang Y."/>
            <person name="Lin X."/>
            <person name="Liu X."/>
            <person name="Mattei B."/>
            <person name="McIntosh T.C."/>
            <person name="McLeod M.P."/>
            <person name="McPherson D."/>
            <person name="Merkulov G."/>
            <person name="Milshina N.V."/>
            <person name="Mobarry C."/>
            <person name="Morris J."/>
            <person name="Moshrefi A."/>
            <person name="Mount S.M."/>
            <person name="Moy M."/>
            <person name="Murphy B."/>
            <person name="Murphy L."/>
            <person name="Muzny D.M."/>
            <person name="Nelson D.L."/>
            <person name="Nelson D.R."/>
            <person name="Nelson K.A."/>
            <person name="Nixon K."/>
            <person name="Nusskern D.R."/>
            <person name="Pacleb J.M."/>
            <person name="Palazzolo M."/>
            <person name="Pittman G.S."/>
            <person name="Pan S."/>
            <person name="Pollard J."/>
            <person name="Puri V."/>
            <person name="Reese M.G."/>
            <person name="Reinert K."/>
            <person name="Remington K."/>
            <person name="Saunders R.D.C."/>
            <person name="Scheeler F."/>
            <person name="Shen H."/>
            <person name="Shue B.C."/>
            <person name="Siden-Kiamos I."/>
            <person name="Simpson M."/>
            <person name="Skupski M.P."/>
            <person name="Smith T.J."/>
            <person name="Spier E."/>
            <person name="Spradling A.C."/>
            <person name="Stapleton M."/>
            <person name="Strong R."/>
            <person name="Sun E."/>
            <person name="Svirskas R."/>
            <person name="Tector C."/>
            <person name="Turner R."/>
            <person name="Venter E."/>
            <person name="Wang A.H."/>
            <person name="Wang X."/>
            <person name="Wang Z.-Y."/>
            <person name="Wassarman D.A."/>
            <person name="Weinstock G.M."/>
            <person name="Weissenbach J."/>
            <person name="Williams S.M."/>
            <person name="Woodage T."/>
            <person name="Worley K.C."/>
            <person name="Wu D."/>
            <person name="Yang S."/>
            <person name="Yao Q.A."/>
            <person name="Ye J."/>
            <person name="Yeh R.-F."/>
            <person name="Zaveri J.S."/>
            <person name="Zhan M."/>
            <person name="Zhang G."/>
            <person name="Zhao Q."/>
            <person name="Zheng L."/>
            <person name="Zheng X.H."/>
            <person name="Zhong F.N."/>
            <person name="Zhong W."/>
            <person name="Zhou X."/>
            <person name="Zhu S.C."/>
            <person name="Zhu X."/>
            <person name="Smith H.O."/>
            <person name="Gibbs R.A."/>
            <person name="Myers E.W."/>
            <person name="Rubin G.M."/>
            <person name="Venter J.C."/>
        </authorList>
    </citation>
    <scope>NUCLEOTIDE SEQUENCE [LARGE SCALE GENOMIC DNA]</scope>
    <source>
        <strain>Berkeley</strain>
    </source>
</reference>
<reference key="3">
    <citation type="journal article" date="2002" name="Genome Biol.">
        <title>Annotation of the Drosophila melanogaster euchromatic genome: a systematic review.</title>
        <authorList>
            <person name="Misra S."/>
            <person name="Crosby M.A."/>
            <person name="Mungall C.J."/>
            <person name="Matthews B.B."/>
            <person name="Campbell K.S."/>
            <person name="Hradecky P."/>
            <person name="Huang Y."/>
            <person name="Kaminker J.S."/>
            <person name="Millburn G.H."/>
            <person name="Prochnik S.E."/>
            <person name="Smith C.D."/>
            <person name="Tupy J.L."/>
            <person name="Whitfield E.J."/>
            <person name="Bayraktaroglu L."/>
            <person name="Berman B.P."/>
            <person name="Bettencourt B.R."/>
            <person name="Celniker S.E."/>
            <person name="de Grey A.D.N.J."/>
            <person name="Drysdale R.A."/>
            <person name="Harris N.L."/>
            <person name="Richter J."/>
            <person name="Russo S."/>
            <person name="Schroeder A.J."/>
            <person name="Shu S.Q."/>
            <person name="Stapleton M."/>
            <person name="Yamada C."/>
            <person name="Ashburner M."/>
            <person name="Gelbart W.M."/>
            <person name="Rubin G.M."/>
            <person name="Lewis S.E."/>
        </authorList>
    </citation>
    <scope>GENOME REANNOTATION</scope>
    <source>
        <strain>Berkeley</strain>
    </source>
</reference>
<reference key="4">
    <citation type="submission" date="1994-05" db="EMBL/GenBank/DDBJ databases">
        <title>Serine protease genes expressed in haematophagous insects.</title>
        <authorList>
            <person name="Elvin C.M."/>
            <person name="Bunch R."/>
            <person name="Vuocolo T."/>
            <person name="Hemingway J."/>
            <person name="Smith W.J."/>
            <person name="Riddles P.W."/>
        </authorList>
    </citation>
    <scope>NUCLEOTIDE SEQUENCE [MRNA] OF 72-219</scope>
</reference>
<keyword id="KW-1015">Disulfide bond</keyword>
<keyword id="KW-0378">Hydrolase</keyword>
<keyword id="KW-0645">Protease</keyword>
<keyword id="KW-1185">Reference proteome</keyword>
<keyword id="KW-0720">Serine protease</keyword>
<keyword id="KW-0732">Signal</keyword>
<keyword id="KW-0865">Zymogen</keyword>
<evidence type="ECO:0000250" key="1"/>
<evidence type="ECO:0000255" key="2">
    <source>
        <dbReference type="PROSITE-ProRule" id="PRU00274"/>
    </source>
</evidence>
<evidence type="ECO:0000269" key="3">
    <source>
    </source>
</evidence>
<evidence type="ECO:0000303" key="4">
    <source>
    </source>
</evidence>
<evidence type="ECO:0000305" key="5"/>
<evidence type="ECO:0000312" key="6">
    <source>
        <dbReference type="FlyBase" id="FBgn0003356"/>
    </source>
</evidence>
<dbReference type="EC" id="3.4.21.-"/>
<dbReference type="EMBL" id="M24379">
    <property type="protein sequence ID" value="AAB02552.1"/>
    <property type="molecule type" value="Genomic_DNA"/>
</dbReference>
<dbReference type="EMBL" id="AE014297">
    <property type="protein sequence ID" value="AAF56972.1"/>
    <property type="molecule type" value="Genomic_DNA"/>
</dbReference>
<dbReference type="EMBL" id="U09800">
    <property type="protein sequence ID" value="AAA18625.1"/>
    <property type="molecule type" value="mRNA"/>
</dbReference>
<dbReference type="PIR" id="JS0260">
    <property type="entry name" value="JS0260"/>
</dbReference>
<dbReference type="RefSeq" id="NP_524554.1">
    <property type="nucleotide sequence ID" value="NM_079830.4"/>
</dbReference>
<dbReference type="SMR" id="C0HKF7"/>
<dbReference type="FunCoup" id="C0HKF7">
    <property type="interactions" value="29"/>
</dbReference>
<dbReference type="STRING" id="7227.FBpp0084878"/>
<dbReference type="PaxDb" id="7227-FBpp0084868"/>
<dbReference type="DNASU" id="43544"/>
<dbReference type="EnsemblMetazoa" id="FBtr0085502">
    <property type="protein sequence ID" value="FBpp0084868"/>
    <property type="gene ID" value="FBgn0003357"/>
</dbReference>
<dbReference type="EnsemblMetazoa" id="FBtr0085512">
    <property type="protein sequence ID" value="FBpp0084878"/>
    <property type="gene ID" value="FBgn0003356"/>
</dbReference>
<dbReference type="EnsemblMetazoa" id="FBtr0346340">
    <property type="protein sequence ID" value="FBpp0312057"/>
    <property type="gene ID" value="FBgn0003357"/>
</dbReference>
<dbReference type="GeneID" id="43544"/>
<dbReference type="KEGG" id="dme:Dmel_CG31034"/>
<dbReference type="KEGG" id="dme:Dmel_CG31362"/>
<dbReference type="AGR" id="FB:FBgn0003356"/>
<dbReference type="CTD" id="43543"/>
<dbReference type="CTD" id="43544"/>
<dbReference type="FlyBase" id="FBgn0003356">
    <property type="gene designation" value="Jon99Cii"/>
</dbReference>
<dbReference type="VEuPathDB" id="VectorBase:FBgn0003356"/>
<dbReference type="VEuPathDB" id="VectorBase:FBgn0003357"/>
<dbReference type="eggNOG" id="KOG3627">
    <property type="taxonomic scope" value="Eukaryota"/>
</dbReference>
<dbReference type="InParanoid" id="C0HKF7"/>
<dbReference type="OMA" id="FIQHEHY"/>
<dbReference type="OrthoDB" id="7840934at2759"/>
<dbReference type="ChiTaRS" id="Spn43Aa">
    <property type="organism name" value="fly"/>
</dbReference>
<dbReference type="PRO" id="PR:C0HKF7"/>
<dbReference type="Proteomes" id="UP000000803">
    <property type="component" value="Chromosome 3R"/>
</dbReference>
<dbReference type="Bgee" id="FBgn0003356">
    <property type="expression patterns" value="Expressed in enterocyte of anterior adult midgut epithelium in digestive tract and 59 other cell types or tissues"/>
</dbReference>
<dbReference type="ExpressionAtlas" id="C0HKF7">
    <property type="expression patterns" value="baseline and differential"/>
</dbReference>
<dbReference type="GO" id="GO:0005615">
    <property type="term" value="C:extracellular space"/>
    <property type="evidence" value="ECO:0000318"/>
    <property type="project" value="GO_Central"/>
</dbReference>
<dbReference type="GO" id="GO:0017171">
    <property type="term" value="F:serine hydrolase activity"/>
    <property type="evidence" value="ECO:0007005"/>
    <property type="project" value="FlyBase"/>
</dbReference>
<dbReference type="GO" id="GO:0004252">
    <property type="term" value="F:serine-type endopeptidase activity"/>
    <property type="evidence" value="ECO:0000255"/>
    <property type="project" value="FlyBase"/>
</dbReference>
<dbReference type="GO" id="GO:0045087">
    <property type="term" value="P:innate immune response"/>
    <property type="evidence" value="ECO:0000318"/>
    <property type="project" value="GO_Central"/>
</dbReference>
<dbReference type="GO" id="GO:0006508">
    <property type="term" value="P:proteolysis"/>
    <property type="evidence" value="ECO:0000255"/>
    <property type="project" value="FlyBase"/>
</dbReference>
<dbReference type="CDD" id="cd00190">
    <property type="entry name" value="Tryp_SPc"/>
    <property type="match status" value="1"/>
</dbReference>
<dbReference type="FunFam" id="2.40.10.10:FF:000025">
    <property type="entry name" value="serine proteases 1/2"/>
    <property type="match status" value="1"/>
</dbReference>
<dbReference type="FunFam" id="2.40.10.10:FF:000043">
    <property type="entry name" value="serine proteases 1/2"/>
    <property type="match status" value="1"/>
</dbReference>
<dbReference type="Gene3D" id="2.40.10.10">
    <property type="entry name" value="Trypsin-like serine proteases"/>
    <property type="match status" value="2"/>
</dbReference>
<dbReference type="InterPro" id="IPR050430">
    <property type="entry name" value="Peptidase_S1"/>
</dbReference>
<dbReference type="InterPro" id="IPR009003">
    <property type="entry name" value="Peptidase_S1_PA"/>
</dbReference>
<dbReference type="InterPro" id="IPR043504">
    <property type="entry name" value="Peptidase_S1_PA_chymotrypsin"/>
</dbReference>
<dbReference type="InterPro" id="IPR001314">
    <property type="entry name" value="Peptidase_S1A"/>
</dbReference>
<dbReference type="InterPro" id="IPR001254">
    <property type="entry name" value="Trypsin_dom"/>
</dbReference>
<dbReference type="InterPro" id="IPR018114">
    <property type="entry name" value="TRYPSIN_HIS"/>
</dbReference>
<dbReference type="InterPro" id="IPR033116">
    <property type="entry name" value="TRYPSIN_SER"/>
</dbReference>
<dbReference type="PANTHER" id="PTHR24276:SF98">
    <property type="entry name" value="FI18310P1-RELATED"/>
    <property type="match status" value="1"/>
</dbReference>
<dbReference type="PANTHER" id="PTHR24276">
    <property type="entry name" value="POLYSERASE-RELATED"/>
    <property type="match status" value="1"/>
</dbReference>
<dbReference type="Pfam" id="PF00089">
    <property type="entry name" value="Trypsin"/>
    <property type="match status" value="1"/>
</dbReference>
<dbReference type="PRINTS" id="PR00722">
    <property type="entry name" value="CHYMOTRYPSIN"/>
</dbReference>
<dbReference type="SMART" id="SM00020">
    <property type="entry name" value="Tryp_SPc"/>
    <property type="match status" value="1"/>
</dbReference>
<dbReference type="SUPFAM" id="SSF50494">
    <property type="entry name" value="Trypsin-like serine proteases"/>
    <property type="match status" value="1"/>
</dbReference>
<dbReference type="PROSITE" id="PS50240">
    <property type="entry name" value="TRYPSIN_DOM"/>
    <property type="match status" value="1"/>
</dbReference>
<dbReference type="PROSITE" id="PS00134">
    <property type="entry name" value="TRYPSIN_HIS"/>
    <property type="match status" value="1"/>
</dbReference>
<dbReference type="PROSITE" id="PS00135">
    <property type="entry name" value="TRYPSIN_SER"/>
    <property type="match status" value="1"/>
</dbReference>
<protein>
    <recommendedName>
        <fullName evidence="4">Serine protease 1</fullName>
        <ecNumber>3.4.21.-</ecNumber>
    </recommendedName>
    <alternativeName>
        <fullName evidence="5">Protein Jonah 99Cii</fullName>
    </alternativeName>
</protein>